<gene>
    <name type="ordered locus">Bphyt_7102</name>
</gene>
<sequence length="227" mass="25178">MLLHIPNVLNAEQLRLVRERLDQAGDAWVDGRATAGYQGAPVKRNQQIAEHTPVARELGDVILASIERNPLFISAVLPNQVYPPLFNRYEGGMQFGSHVDGAVRVLPNGVKLRTDVSVTLFISDPADYDGGELVIEDTYGVQQVKLPAGDMIVYPATSLHQVTPVTRGARIASFFWVQSLVRSDTQRAMLFDMDTAIQRLNASHADDTARRSLVGIYHNLLRTWSET</sequence>
<feature type="chain" id="PRO_1000131206" description="PKHD-type hydroxylase Bphyt_7102">
    <location>
        <begin position="1"/>
        <end position="227"/>
    </location>
</feature>
<feature type="domain" description="Fe2OG dioxygenase" evidence="1">
    <location>
        <begin position="80"/>
        <end position="179"/>
    </location>
</feature>
<feature type="binding site" evidence="1">
    <location>
        <position position="98"/>
    </location>
    <ligand>
        <name>Fe cation</name>
        <dbReference type="ChEBI" id="CHEBI:24875"/>
    </ligand>
</feature>
<feature type="binding site" evidence="1">
    <location>
        <position position="100"/>
    </location>
    <ligand>
        <name>Fe cation</name>
        <dbReference type="ChEBI" id="CHEBI:24875"/>
    </ligand>
</feature>
<feature type="binding site" evidence="1">
    <location>
        <position position="160"/>
    </location>
    <ligand>
        <name>Fe cation</name>
        <dbReference type="ChEBI" id="CHEBI:24875"/>
    </ligand>
</feature>
<feature type="binding site" evidence="1">
    <location>
        <position position="170"/>
    </location>
    <ligand>
        <name>2-oxoglutarate</name>
        <dbReference type="ChEBI" id="CHEBI:16810"/>
    </ligand>
</feature>
<reference key="1">
    <citation type="journal article" date="2011" name="J. Bacteriol.">
        <title>Complete genome sequence of the plant growth-promoting endophyte Burkholderia phytofirmans strain PsJN.</title>
        <authorList>
            <person name="Weilharter A."/>
            <person name="Mitter B."/>
            <person name="Shin M.V."/>
            <person name="Chain P.S."/>
            <person name="Nowak J."/>
            <person name="Sessitsch A."/>
        </authorList>
    </citation>
    <scope>NUCLEOTIDE SEQUENCE [LARGE SCALE GENOMIC DNA]</scope>
    <source>
        <strain>DSM 17436 / LMG 22146 / PsJN</strain>
    </source>
</reference>
<dbReference type="EC" id="1.14.11.-" evidence="1"/>
<dbReference type="EMBL" id="CP001053">
    <property type="protein sequence ID" value="ACD21390.1"/>
    <property type="molecule type" value="Genomic_DNA"/>
</dbReference>
<dbReference type="RefSeq" id="WP_012428886.1">
    <property type="nucleotide sequence ID" value="NC_010676.1"/>
</dbReference>
<dbReference type="SMR" id="B2TA88"/>
<dbReference type="STRING" id="398527.Bphyt_7102"/>
<dbReference type="KEGG" id="bpy:Bphyt_7102"/>
<dbReference type="eggNOG" id="COG3128">
    <property type="taxonomic scope" value="Bacteria"/>
</dbReference>
<dbReference type="HOGENOM" id="CLU_106663_0_0_4"/>
<dbReference type="OrthoDB" id="9812472at2"/>
<dbReference type="Proteomes" id="UP000001739">
    <property type="component" value="Chromosome 2"/>
</dbReference>
<dbReference type="GO" id="GO:0016706">
    <property type="term" value="F:2-oxoglutarate-dependent dioxygenase activity"/>
    <property type="evidence" value="ECO:0007669"/>
    <property type="project" value="UniProtKB-UniRule"/>
</dbReference>
<dbReference type="GO" id="GO:0005506">
    <property type="term" value="F:iron ion binding"/>
    <property type="evidence" value="ECO:0007669"/>
    <property type="project" value="UniProtKB-UniRule"/>
</dbReference>
<dbReference type="GO" id="GO:0031418">
    <property type="term" value="F:L-ascorbic acid binding"/>
    <property type="evidence" value="ECO:0007669"/>
    <property type="project" value="UniProtKB-KW"/>
</dbReference>
<dbReference type="GO" id="GO:0006974">
    <property type="term" value="P:DNA damage response"/>
    <property type="evidence" value="ECO:0007669"/>
    <property type="project" value="TreeGrafter"/>
</dbReference>
<dbReference type="GO" id="GO:0006879">
    <property type="term" value="P:intracellular iron ion homeostasis"/>
    <property type="evidence" value="ECO:0007669"/>
    <property type="project" value="TreeGrafter"/>
</dbReference>
<dbReference type="Gene3D" id="2.60.120.620">
    <property type="entry name" value="q2cbj1_9rhob like domain"/>
    <property type="match status" value="1"/>
</dbReference>
<dbReference type="Gene3D" id="4.10.860.20">
    <property type="entry name" value="Rabenosyn, Rab binding domain"/>
    <property type="match status" value="1"/>
</dbReference>
<dbReference type="HAMAP" id="MF_00657">
    <property type="entry name" value="Hydroxyl_YbiX"/>
    <property type="match status" value="1"/>
</dbReference>
<dbReference type="InterPro" id="IPR005123">
    <property type="entry name" value="Oxoglu/Fe-dep_dioxygenase_dom"/>
</dbReference>
<dbReference type="InterPro" id="IPR041097">
    <property type="entry name" value="PKHD_C"/>
</dbReference>
<dbReference type="InterPro" id="IPR023550">
    <property type="entry name" value="PKHD_hydroxylase"/>
</dbReference>
<dbReference type="InterPro" id="IPR006620">
    <property type="entry name" value="Pro_4_hyd_alph"/>
</dbReference>
<dbReference type="InterPro" id="IPR044862">
    <property type="entry name" value="Pro_4_hyd_alph_FE2OG_OXY"/>
</dbReference>
<dbReference type="NCBIfam" id="NF003974">
    <property type="entry name" value="PRK05467.1-3"/>
    <property type="match status" value="1"/>
</dbReference>
<dbReference type="NCBIfam" id="NF003975">
    <property type="entry name" value="PRK05467.1-4"/>
    <property type="match status" value="1"/>
</dbReference>
<dbReference type="PANTHER" id="PTHR41536">
    <property type="entry name" value="PKHD-TYPE HYDROXYLASE YBIX"/>
    <property type="match status" value="1"/>
</dbReference>
<dbReference type="PANTHER" id="PTHR41536:SF1">
    <property type="entry name" value="PKHD-TYPE HYDROXYLASE YBIX"/>
    <property type="match status" value="1"/>
</dbReference>
<dbReference type="Pfam" id="PF13640">
    <property type="entry name" value="2OG-FeII_Oxy_3"/>
    <property type="match status" value="1"/>
</dbReference>
<dbReference type="Pfam" id="PF18331">
    <property type="entry name" value="PKHD_C"/>
    <property type="match status" value="1"/>
</dbReference>
<dbReference type="SMART" id="SM00702">
    <property type="entry name" value="P4Hc"/>
    <property type="match status" value="1"/>
</dbReference>
<dbReference type="SUPFAM" id="SSF51197">
    <property type="entry name" value="Clavaminate synthase-like"/>
    <property type="match status" value="1"/>
</dbReference>
<dbReference type="PROSITE" id="PS51471">
    <property type="entry name" value="FE2OG_OXY"/>
    <property type="match status" value="1"/>
</dbReference>
<accession>B2TA88</accession>
<organism>
    <name type="scientific">Paraburkholderia phytofirmans (strain DSM 17436 / LMG 22146 / PsJN)</name>
    <name type="common">Burkholderia phytofirmans</name>
    <dbReference type="NCBI Taxonomy" id="398527"/>
    <lineage>
        <taxon>Bacteria</taxon>
        <taxon>Pseudomonadati</taxon>
        <taxon>Pseudomonadota</taxon>
        <taxon>Betaproteobacteria</taxon>
        <taxon>Burkholderiales</taxon>
        <taxon>Burkholderiaceae</taxon>
        <taxon>Paraburkholderia</taxon>
    </lineage>
</organism>
<comment type="cofactor">
    <cofactor evidence="1">
        <name>Fe(2+)</name>
        <dbReference type="ChEBI" id="CHEBI:29033"/>
    </cofactor>
    <text evidence="1">Binds 1 Fe(2+) ion per subunit.</text>
</comment>
<comment type="cofactor">
    <cofactor evidence="1">
        <name>L-ascorbate</name>
        <dbReference type="ChEBI" id="CHEBI:38290"/>
    </cofactor>
</comment>
<evidence type="ECO:0000255" key="1">
    <source>
        <dbReference type="HAMAP-Rule" id="MF_00657"/>
    </source>
</evidence>
<keyword id="KW-0223">Dioxygenase</keyword>
<keyword id="KW-0408">Iron</keyword>
<keyword id="KW-0479">Metal-binding</keyword>
<keyword id="KW-0560">Oxidoreductase</keyword>
<keyword id="KW-0847">Vitamin C</keyword>
<protein>
    <recommendedName>
        <fullName evidence="1">PKHD-type hydroxylase Bphyt_7102</fullName>
        <ecNumber evidence="1">1.14.11.-</ecNumber>
    </recommendedName>
</protein>
<proteinExistence type="inferred from homology"/>
<name>Y7102_PARPJ</name>